<protein>
    <recommendedName>
        <fullName>Amino-acid acetyltransferase, mitochondrial</fullName>
        <ecNumber>2.3.1.1</ecNumber>
    </recommendedName>
    <alternativeName>
        <fullName>Arginine-requiring protein 6</fullName>
    </alternativeName>
    <alternativeName>
        <fullName>Glutamate N-acetyltransferase</fullName>
    </alternativeName>
    <alternativeName>
        <fullName>N-acetylglutamate synthase</fullName>
        <shortName>AGS</shortName>
        <shortName>NAGS</shortName>
    </alternativeName>
</protein>
<comment type="function">
    <text evidence="1">N-acetylglutamate synthase involved in arginine biosynthesis.</text>
</comment>
<comment type="catalytic activity">
    <reaction>
        <text>L-glutamate + acetyl-CoA = N-acetyl-L-glutamate + CoA + H(+)</text>
        <dbReference type="Rhea" id="RHEA:24292"/>
        <dbReference type="ChEBI" id="CHEBI:15378"/>
        <dbReference type="ChEBI" id="CHEBI:29985"/>
        <dbReference type="ChEBI" id="CHEBI:44337"/>
        <dbReference type="ChEBI" id="CHEBI:57287"/>
        <dbReference type="ChEBI" id="CHEBI:57288"/>
        <dbReference type="EC" id="2.3.1.1"/>
    </reaction>
</comment>
<comment type="pathway">
    <text>Amino-acid biosynthesis; L-arginine biosynthesis; N(2)-acetyl-L-ornithine from L-glutamate: step 1/4.</text>
</comment>
<comment type="subcellular location">
    <subcellularLocation>
        <location evidence="4">Mitochondrion</location>
    </subcellularLocation>
</comment>
<comment type="similarity">
    <text evidence="5">Belongs to the acetyltransferase family.</text>
</comment>
<dbReference type="EC" id="2.3.1.1"/>
<dbReference type="EMBL" id="CU329671">
    <property type="protein sequence ID" value="CAA22186.1"/>
    <property type="molecule type" value="Genomic_DNA"/>
</dbReference>
<dbReference type="PIR" id="T40666">
    <property type="entry name" value="T40666"/>
</dbReference>
<dbReference type="RefSeq" id="NP_595494.1">
    <property type="nucleotide sequence ID" value="NM_001021405.2"/>
</dbReference>
<dbReference type="SMR" id="O94330"/>
<dbReference type="BioGRID" id="277697">
    <property type="interactions" value="45"/>
</dbReference>
<dbReference type="FunCoup" id="O94330">
    <property type="interactions" value="116"/>
</dbReference>
<dbReference type="STRING" id="284812.O94330"/>
<dbReference type="iPTMnet" id="O94330"/>
<dbReference type="PaxDb" id="4896-SPBC725.14.1"/>
<dbReference type="EnsemblFungi" id="SPBC725.14.1">
    <property type="protein sequence ID" value="SPBC725.14.1:pep"/>
    <property type="gene ID" value="SPBC725.14"/>
</dbReference>
<dbReference type="GeneID" id="2541183"/>
<dbReference type="KEGG" id="spo:2541183"/>
<dbReference type="PomBase" id="SPBC725.14">
    <property type="gene designation" value="arg6"/>
</dbReference>
<dbReference type="VEuPathDB" id="FungiDB:SPBC725.14"/>
<dbReference type="eggNOG" id="KOG2436">
    <property type="taxonomic scope" value="Eukaryota"/>
</dbReference>
<dbReference type="HOGENOM" id="CLU_013088_0_0_1"/>
<dbReference type="InParanoid" id="O94330"/>
<dbReference type="OMA" id="PKELIWR"/>
<dbReference type="PhylomeDB" id="O94330"/>
<dbReference type="UniPathway" id="UPA00068">
    <property type="reaction ID" value="UER00106"/>
</dbReference>
<dbReference type="PRO" id="PR:O94330"/>
<dbReference type="Proteomes" id="UP000002485">
    <property type="component" value="Chromosome II"/>
</dbReference>
<dbReference type="GO" id="GO:0005759">
    <property type="term" value="C:mitochondrial matrix"/>
    <property type="evidence" value="ECO:0000318"/>
    <property type="project" value="GO_Central"/>
</dbReference>
<dbReference type="GO" id="GO:0005739">
    <property type="term" value="C:mitochondrion"/>
    <property type="evidence" value="ECO:0007005"/>
    <property type="project" value="PomBase"/>
</dbReference>
<dbReference type="GO" id="GO:0004042">
    <property type="term" value="F:L-glutamate N-acetyltransferase activity"/>
    <property type="evidence" value="ECO:0000318"/>
    <property type="project" value="GO_Central"/>
</dbReference>
<dbReference type="GO" id="GO:0042450">
    <property type="term" value="P:arginine biosynthetic process via ornithine"/>
    <property type="evidence" value="ECO:0000269"/>
    <property type="project" value="PomBase"/>
</dbReference>
<dbReference type="GO" id="GO:0006536">
    <property type="term" value="P:glutamate metabolic process"/>
    <property type="evidence" value="ECO:0000303"/>
    <property type="project" value="PomBase"/>
</dbReference>
<dbReference type="GO" id="GO:0006526">
    <property type="term" value="P:L-arginine biosynthetic process"/>
    <property type="evidence" value="ECO:0000269"/>
    <property type="project" value="PomBase"/>
</dbReference>
<dbReference type="GO" id="GO:0006592">
    <property type="term" value="P:ornithine biosynthetic process"/>
    <property type="evidence" value="ECO:0000318"/>
    <property type="project" value="GO_Central"/>
</dbReference>
<dbReference type="CDD" id="cd04266">
    <property type="entry name" value="DUF619-NAGS-FABP"/>
    <property type="match status" value="1"/>
</dbReference>
<dbReference type="FunFam" id="3.40.630.30:FF:000049">
    <property type="entry name" value="Amino-acid acetyltransferase, mitochondrial"/>
    <property type="match status" value="1"/>
</dbReference>
<dbReference type="Gene3D" id="3.40.630.30">
    <property type="match status" value="1"/>
</dbReference>
<dbReference type="InterPro" id="IPR011190">
    <property type="entry name" value="GlcNAc_Synth_fun"/>
</dbReference>
<dbReference type="InterPro" id="IPR006855">
    <property type="entry name" value="Vertebrate-like_GNAT_dom"/>
</dbReference>
<dbReference type="PANTHER" id="PTHR23342:SF4">
    <property type="entry name" value="AMINO-ACID ACETYLTRANSFERASE, MITOCHONDRIAL"/>
    <property type="match status" value="1"/>
</dbReference>
<dbReference type="PANTHER" id="PTHR23342">
    <property type="entry name" value="N-ACETYLGLUTAMATE SYNTHASE"/>
    <property type="match status" value="1"/>
</dbReference>
<dbReference type="Pfam" id="PF04768">
    <property type="entry name" value="NAT"/>
    <property type="match status" value="1"/>
</dbReference>
<dbReference type="PIRSF" id="PIRSF007892">
    <property type="entry name" value="NAGS_fungal"/>
    <property type="match status" value="1"/>
</dbReference>
<dbReference type="PROSITE" id="PS51731">
    <property type="entry name" value="GNAT_NAGS"/>
    <property type="match status" value="1"/>
</dbReference>
<sequence>MQKPSLSQDLIWILKSVQSRRSTKGFLQKHSSLKDGSPNKKSFAQPISSSFLNRISITKIDDVDSLSDNTLYGIGRSINSLARLGIQSVIVPTSNPIGMTSPFKYLENGTVVAKKRKLSIFEELQQQQNRVIRVSEIFSKAGVLTRPSYSSVCQLGPEGPSVENVQGIFQALSSLYTVIVPSSILMPNVIEVPIDGNEVLAGLTYSLHKPNFGFWVDRIVILDKNGGMPCSKRQTGSSHVLINLAQEFDELAKTLPPYHRKNLILVRRCLKMLPDDASALITTPEDAMLTNPVLDKNPLIHNVLTDRSIISCSLPRDRSPITKTTVLRSGVPVYTFLGPKCLTDGSVSWERLWVLINDSFKRTLDMDAYLDRLKNSLAAVIIAGDYLGTAIVTYEQPDGTTNEKVPYLDKLAVSQGAQGSAAISDVMFNVMTDLFPKELIWRSRLTNPVNKWYFERSVGSLKSSKTPWKLFWTGDSHVRNLDRVNQYMSVIDKIQPTWLN</sequence>
<evidence type="ECO:0000250" key="1"/>
<evidence type="ECO:0000255" key="2"/>
<evidence type="ECO:0000255" key="3">
    <source>
        <dbReference type="PROSITE-ProRule" id="PRU00532"/>
    </source>
</evidence>
<evidence type="ECO:0000269" key="4">
    <source>
    </source>
</evidence>
<evidence type="ECO:0000305" key="5"/>
<feature type="transit peptide" description="Mitochondrion" evidence="2">
    <location>
        <begin position="1"/>
        <end position="19"/>
    </location>
</feature>
<feature type="chain" id="PRO_0000372579" description="Amino-acid acetyltransferase, mitochondrial">
    <location>
        <begin position="20"/>
        <end position="500"/>
    </location>
</feature>
<feature type="domain" description="N-acetyltransferase" evidence="3">
    <location>
        <begin position="336"/>
        <end position="496"/>
    </location>
</feature>
<reference key="1">
    <citation type="journal article" date="2002" name="Nature">
        <title>The genome sequence of Schizosaccharomyces pombe.</title>
        <authorList>
            <person name="Wood V."/>
            <person name="Gwilliam R."/>
            <person name="Rajandream M.A."/>
            <person name="Lyne M.H."/>
            <person name="Lyne R."/>
            <person name="Stewart A."/>
            <person name="Sgouros J.G."/>
            <person name="Peat N."/>
            <person name="Hayles J."/>
            <person name="Baker S.G."/>
            <person name="Basham D."/>
            <person name="Bowman S."/>
            <person name="Brooks K."/>
            <person name="Brown D."/>
            <person name="Brown S."/>
            <person name="Chillingworth T."/>
            <person name="Churcher C.M."/>
            <person name="Collins M."/>
            <person name="Connor R."/>
            <person name="Cronin A."/>
            <person name="Davis P."/>
            <person name="Feltwell T."/>
            <person name="Fraser A."/>
            <person name="Gentles S."/>
            <person name="Goble A."/>
            <person name="Hamlin N."/>
            <person name="Harris D.E."/>
            <person name="Hidalgo J."/>
            <person name="Hodgson G."/>
            <person name="Holroyd S."/>
            <person name="Hornsby T."/>
            <person name="Howarth S."/>
            <person name="Huckle E.J."/>
            <person name="Hunt S."/>
            <person name="Jagels K."/>
            <person name="James K.D."/>
            <person name="Jones L."/>
            <person name="Jones M."/>
            <person name="Leather S."/>
            <person name="McDonald S."/>
            <person name="McLean J."/>
            <person name="Mooney P."/>
            <person name="Moule S."/>
            <person name="Mungall K.L."/>
            <person name="Murphy L.D."/>
            <person name="Niblett D."/>
            <person name="Odell C."/>
            <person name="Oliver K."/>
            <person name="O'Neil S."/>
            <person name="Pearson D."/>
            <person name="Quail M.A."/>
            <person name="Rabbinowitsch E."/>
            <person name="Rutherford K.M."/>
            <person name="Rutter S."/>
            <person name="Saunders D."/>
            <person name="Seeger K."/>
            <person name="Sharp S."/>
            <person name="Skelton J."/>
            <person name="Simmonds M.N."/>
            <person name="Squares R."/>
            <person name="Squares S."/>
            <person name="Stevens K."/>
            <person name="Taylor K."/>
            <person name="Taylor R.G."/>
            <person name="Tivey A."/>
            <person name="Walsh S.V."/>
            <person name="Warren T."/>
            <person name="Whitehead S."/>
            <person name="Woodward J.R."/>
            <person name="Volckaert G."/>
            <person name="Aert R."/>
            <person name="Robben J."/>
            <person name="Grymonprez B."/>
            <person name="Weltjens I."/>
            <person name="Vanstreels E."/>
            <person name="Rieger M."/>
            <person name="Schaefer M."/>
            <person name="Mueller-Auer S."/>
            <person name="Gabel C."/>
            <person name="Fuchs M."/>
            <person name="Duesterhoeft A."/>
            <person name="Fritzc C."/>
            <person name="Holzer E."/>
            <person name="Moestl D."/>
            <person name="Hilbert H."/>
            <person name="Borzym K."/>
            <person name="Langer I."/>
            <person name="Beck A."/>
            <person name="Lehrach H."/>
            <person name="Reinhardt R."/>
            <person name="Pohl T.M."/>
            <person name="Eger P."/>
            <person name="Zimmermann W."/>
            <person name="Wedler H."/>
            <person name="Wambutt R."/>
            <person name="Purnelle B."/>
            <person name="Goffeau A."/>
            <person name="Cadieu E."/>
            <person name="Dreano S."/>
            <person name="Gloux S."/>
            <person name="Lelaure V."/>
            <person name="Mottier S."/>
            <person name="Galibert F."/>
            <person name="Aves S.J."/>
            <person name="Xiang Z."/>
            <person name="Hunt C."/>
            <person name="Moore K."/>
            <person name="Hurst S.M."/>
            <person name="Lucas M."/>
            <person name="Rochet M."/>
            <person name="Gaillardin C."/>
            <person name="Tallada V.A."/>
            <person name="Garzon A."/>
            <person name="Thode G."/>
            <person name="Daga R.R."/>
            <person name="Cruzado L."/>
            <person name="Jimenez J."/>
            <person name="Sanchez M."/>
            <person name="del Rey F."/>
            <person name="Benito J."/>
            <person name="Dominguez A."/>
            <person name="Revuelta J.L."/>
            <person name="Moreno S."/>
            <person name="Armstrong J."/>
            <person name="Forsburg S.L."/>
            <person name="Cerutti L."/>
            <person name="Lowe T."/>
            <person name="McCombie W.R."/>
            <person name="Paulsen I."/>
            <person name="Potashkin J."/>
            <person name="Shpakovski G.V."/>
            <person name="Ussery D."/>
            <person name="Barrell B.G."/>
            <person name="Nurse P."/>
        </authorList>
    </citation>
    <scope>NUCLEOTIDE SEQUENCE [LARGE SCALE GENOMIC DNA]</scope>
    <source>
        <strain>972 / ATCC 24843</strain>
    </source>
</reference>
<reference key="2">
    <citation type="journal article" date="2006" name="Nat. Biotechnol.">
        <title>ORFeome cloning and global analysis of protein localization in the fission yeast Schizosaccharomyces pombe.</title>
        <authorList>
            <person name="Matsuyama A."/>
            <person name="Arai R."/>
            <person name="Yashiroda Y."/>
            <person name="Shirai A."/>
            <person name="Kamata A."/>
            <person name="Sekido S."/>
            <person name="Kobayashi Y."/>
            <person name="Hashimoto A."/>
            <person name="Hamamoto M."/>
            <person name="Hiraoka Y."/>
            <person name="Horinouchi S."/>
            <person name="Yoshida M."/>
        </authorList>
    </citation>
    <scope>SUBCELLULAR LOCATION [LARGE SCALE ANALYSIS]</scope>
</reference>
<accession>O94330</accession>
<proteinExistence type="inferred from homology"/>
<organism>
    <name type="scientific">Schizosaccharomyces pombe (strain 972 / ATCC 24843)</name>
    <name type="common">Fission yeast</name>
    <dbReference type="NCBI Taxonomy" id="284812"/>
    <lineage>
        <taxon>Eukaryota</taxon>
        <taxon>Fungi</taxon>
        <taxon>Dikarya</taxon>
        <taxon>Ascomycota</taxon>
        <taxon>Taphrinomycotina</taxon>
        <taxon>Schizosaccharomycetes</taxon>
        <taxon>Schizosaccharomycetales</taxon>
        <taxon>Schizosaccharomycetaceae</taxon>
        <taxon>Schizosaccharomyces</taxon>
    </lineage>
</organism>
<gene>
    <name type="primary">arg6</name>
    <name type="ORF">SPBC725.14</name>
</gene>
<name>NAGS_SCHPO</name>
<keyword id="KW-0012">Acyltransferase</keyword>
<keyword id="KW-0028">Amino-acid biosynthesis</keyword>
<keyword id="KW-0496">Mitochondrion</keyword>
<keyword id="KW-1185">Reference proteome</keyword>
<keyword id="KW-0808">Transferase</keyword>
<keyword id="KW-0809">Transit peptide</keyword>